<name>RBPB_NOSS1</name>
<protein>
    <recommendedName>
        <fullName>Putative RNA-binding protein RbpB</fullName>
    </recommendedName>
</protein>
<accession>Q44554</accession>
<accession>Q44308</accession>
<keyword id="KW-1185">Reference proteome</keyword>
<keyword id="KW-0694">RNA-binding</keyword>
<sequence>MSIYVGNLSYDVTEESLNAVFAEYGSVKRVQLPVDRETGRVRGFGFVEMGSDAEETAAIEALDGAEWMGRDLKVNKAKPREDRGGSRGSFGGNRSNNNFRNRY</sequence>
<gene>
    <name type="primary">rbpB</name>
    <name type="ordered locus">all2928</name>
</gene>
<evidence type="ECO:0000250" key="1"/>
<evidence type="ECO:0000255" key="2">
    <source>
        <dbReference type="PROSITE-ProRule" id="PRU00176"/>
    </source>
</evidence>
<evidence type="ECO:0000256" key="3">
    <source>
        <dbReference type="SAM" id="MobiDB-lite"/>
    </source>
</evidence>
<proteinExistence type="inferred from homology"/>
<organism>
    <name type="scientific">Nostoc sp. (strain PCC 7120 / SAG 25.82 / UTEX 2576)</name>
    <dbReference type="NCBI Taxonomy" id="103690"/>
    <lineage>
        <taxon>Bacteria</taxon>
        <taxon>Bacillati</taxon>
        <taxon>Cyanobacteriota</taxon>
        <taxon>Cyanophyceae</taxon>
        <taxon>Nostocales</taxon>
        <taxon>Nostocaceae</taxon>
        <taxon>Nostoc</taxon>
    </lineage>
</organism>
<feature type="initiator methionine" description="Removed" evidence="1">
    <location>
        <position position="1"/>
    </location>
</feature>
<feature type="chain" id="PRO_0000262939" description="Putative RNA-binding protein RbpB">
    <location>
        <begin position="2"/>
        <end position="103"/>
    </location>
</feature>
<feature type="domain" description="RRM" evidence="2">
    <location>
        <begin position="2"/>
        <end position="79"/>
    </location>
</feature>
<feature type="region of interest" description="Disordered" evidence="3">
    <location>
        <begin position="74"/>
        <end position="103"/>
    </location>
</feature>
<feature type="compositionally biased region" description="Basic and acidic residues" evidence="3">
    <location>
        <begin position="74"/>
        <end position="85"/>
    </location>
</feature>
<feature type="compositionally biased region" description="Low complexity" evidence="3">
    <location>
        <begin position="92"/>
        <end position="103"/>
    </location>
</feature>
<dbReference type="EMBL" id="BA000019">
    <property type="protein sequence ID" value="BAB74627.1"/>
    <property type="molecule type" value="Genomic_DNA"/>
</dbReference>
<dbReference type="PIR" id="AI2171">
    <property type="entry name" value="AI2171"/>
</dbReference>
<dbReference type="PIR" id="S44025">
    <property type="entry name" value="S44025"/>
</dbReference>
<dbReference type="PIR" id="S58675">
    <property type="entry name" value="S58675"/>
</dbReference>
<dbReference type="RefSeq" id="WP_010997079.1">
    <property type="nucleotide sequence ID" value="NZ_RSCN01000003.1"/>
</dbReference>
<dbReference type="SMR" id="Q44554"/>
<dbReference type="STRING" id="103690.gene:10494964"/>
<dbReference type="KEGG" id="ana:all2928"/>
<dbReference type="eggNOG" id="COG0724">
    <property type="taxonomic scope" value="Bacteria"/>
</dbReference>
<dbReference type="OrthoDB" id="465979at2"/>
<dbReference type="Proteomes" id="UP000002483">
    <property type="component" value="Chromosome"/>
</dbReference>
<dbReference type="GO" id="GO:0003723">
    <property type="term" value="F:RNA binding"/>
    <property type="evidence" value="ECO:0007669"/>
    <property type="project" value="UniProtKB-KW"/>
</dbReference>
<dbReference type="Gene3D" id="3.30.70.330">
    <property type="match status" value="1"/>
</dbReference>
<dbReference type="InterPro" id="IPR012677">
    <property type="entry name" value="Nucleotide-bd_a/b_plait_sf"/>
</dbReference>
<dbReference type="InterPro" id="IPR035979">
    <property type="entry name" value="RBD_domain_sf"/>
</dbReference>
<dbReference type="InterPro" id="IPR000504">
    <property type="entry name" value="RRM_dom"/>
</dbReference>
<dbReference type="InterPro" id="IPR052462">
    <property type="entry name" value="SLIRP/GR-RBP-like"/>
</dbReference>
<dbReference type="PANTHER" id="PTHR48027">
    <property type="entry name" value="HETEROGENEOUS NUCLEAR RIBONUCLEOPROTEIN 87F-RELATED"/>
    <property type="match status" value="1"/>
</dbReference>
<dbReference type="Pfam" id="PF00076">
    <property type="entry name" value="RRM_1"/>
    <property type="match status" value="1"/>
</dbReference>
<dbReference type="SMART" id="SM00360">
    <property type="entry name" value="RRM"/>
    <property type="match status" value="1"/>
</dbReference>
<dbReference type="SUPFAM" id="SSF54928">
    <property type="entry name" value="RNA-binding domain, RBD"/>
    <property type="match status" value="1"/>
</dbReference>
<dbReference type="PROSITE" id="PS50102">
    <property type="entry name" value="RRM"/>
    <property type="match status" value="1"/>
</dbReference>
<reference key="1">
    <citation type="journal article" date="2001" name="DNA Res.">
        <title>Complete genomic sequence of the filamentous nitrogen-fixing cyanobacterium Anabaena sp. strain PCC 7120.</title>
        <authorList>
            <person name="Kaneko T."/>
            <person name="Nakamura Y."/>
            <person name="Wolk C.P."/>
            <person name="Kuritz T."/>
            <person name="Sasamoto S."/>
            <person name="Watanabe A."/>
            <person name="Iriguchi M."/>
            <person name="Ishikawa A."/>
            <person name="Kawashima K."/>
            <person name="Kimura T."/>
            <person name="Kishida Y."/>
            <person name="Kohara M."/>
            <person name="Matsumoto M."/>
            <person name="Matsuno A."/>
            <person name="Muraki A."/>
            <person name="Nakazaki N."/>
            <person name="Shimpo S."/>
            <person name="Sugimoto M."/>
            <person name="Takazawa M."/>
            <person name="Yamada M."/>
            <person name="Yasuda M."/>
            <person name="Tabata S."/>
        </authorList>
    </citation>
    <scope>NUCLEOTIDE SEQUENCE [LARGE SCALE GENOMIC DNA]</scope>
    <source>
        <strain>PCC 7120 / SAG 25.82 / UTEX 2576</strain>
    </source>
</reference>